<reference key="1">
    <citation type="journal article" date="1987" name="J. Biol. Chem.">
        <title>Nucleotide sequence and hormonal regulation of mouse glycerophosphate dehydrogenase mRNA during adipocyte and muscle cell differentiation.</title>
        <authorList>
            <person name="Dobson D.E."/>
            <person name="Groves D.L."/>
            <person name="Spiegelman B.M."/>
        </authorList>
    </citation>
    <scope>NUCLEOTIDE SEQUENCE [MRNA]</scope>
</reference>
<reference key="2">
    <citation type="journal article" date="1986" name="J. Biol. Chem.">
        <title>Primary structure of the mouse glycerol-3-phosphate dehydrogenase gene.</title>
        <authorList>
            <person name="Ireland R.C."/>
            <person name="Kotarski M.A."/>
            <person name="Johnston L.A."/>
            <person name="Stadler U."/>
            <person name="Birkenmeier E."/>
            <person name="Kozak L.P."/>
        </authorList>
    </citation>
    <scope>NUCLEOTIDE SEQUENCE [GENOMIC DNA]</scope>
</reference>
<reference key="3">
    <citation type="journal article" date="1986" name="J. Biol. Chem.">
        <title>The nucleotide sequence of three genes participating in the adipose differentiation of 3T3 cells.</title>
        <authorList>
            <person name="Phillips M."/>
            <person name="Djian P."/>
            <person name="Green H."/>
        </authorList>
    </citation>
    <scope>NUCLEOTIDE SEQUENCE [GENOMIC DNA]</scope>
</reference>
<reference key="4">
    <citation type="submission" date="2005-02" db="EMBL/GenBank/DDBJ databases">
        <title>Prediction of the coding sequences of mouse homologues of KIAA gene. The complete nucleotide sequences of mouse KIAA-homologous cDNAs identified by screening of terminal sequences of cDNA clones randomly sampled from size-fractionated libraries.</title>
        <authorList>
            <person name="Okazaki N."/>
            <person name="Kikuno R.F."/>
            <person name="Ohara R."/>
            <person name="Inamoto S."/>
            <person name="Nagase T."/>
            <person name="Ohara O."/>
            <person name="Koga H."/>
        </authorList>
    </citation>
    <scope>NUCLEOTIDE SEQUENCE [LARGE SCALE MRNA]</scope>
    <source>
        <tissue>Brain</tissue>
    </source>
</reference>
<reference key="5">
    <citation type="journal article" date="2005" name="Science">
        <title>The transcriptional landscape of the mammalian genome.</title>
        <authorList>
            <person name="Carninci P."/>
            <person name="Kasukawa T."/>
            <person name="Katayama S."/>
            <person name="Gough J."/>
            <person name="Frith M.C."/>
            <person name="Maeda N."/>
            <person name="Oyama R."/>
            <person name="Ravasi T."/>
            <person name="Lenhard B."/>
            <person name="Wells C."/>
            <person name="Kodzius R."/>
            <person name="Shimokawa K."/>
            <person name="Bajic V.B."/>
            <person name="Brenner S.E."/>
            <person name="Batalov S."/>
            <person name="Forrest A.R."/>
            <person name="Zavolan M."/>
            <person name="Davis M.J."/>
            <person name="Wilming L.G."/>
            <person name="Aidinis V."/>
            <person name="Allen J.E."/>
            <person name="Ambesi-Impiombato A."/>
            <person name="Apweiler R."/>
            <person name="Aturaliya R.N."/>
            <person name="Bailey T.L."/>
            <person name="Bansal M."/>
            <person name="Baxter L."/>
            <person name="Beisel K.W."/>
            <person name="Bersano T."/>
            <person name="Bono H."/>
            <person name="Chalk A.M."/>
            <person name="Chiu K.P."/>
            <person name="Choudhary V."/>
            <person name="Christoffels A."/>
            <person name="Clutterbuck D.R."/>
            <person name="Crowe M.L."/>
            <person name="Dalla E."/>
            <person name="Dalrymple B.P."/>
            <person name="de Bono B."/>
            <person name="Della Gatta G."/>
            <person name="di Bernardo D."/>
            <person name="Down T."/>
            <person name="Engstrom P."/>
            <person name="Fagiolini M."/>
            <person name="Faulkner G."/>
            <person name="Fletcher C.F."/>
            <person name="Fukushima T."/>
            <person name="Furuno M."/>
            <person name="Futaki S."/>
            <person name="Gariboldi M."/>
            <person name="Georgii-Hemming P."/>
            <person name="Gingeras T.R."/>
            <person name="Gojobori T."/>
            <person name="Green R.E."/>
            <person name="Gustincich S."/>
            <person name="Harbers M."/>
            <person name="Hayashi Y."/>
            <person name="Hensch T.K."/>
            <person name="Hirokawa N."/>
            <person name="Hill D."/>
            <person name="Huminiecki L."/>
            <person name="Iacono M."/>
            <person name="Ikeo K."/>
            <person name="Iwama A."/>
            <person name="Ishikawa T."/>
            <person name="Jakt M."/>
            <person name="Kanapin A."/>
            <person name="Katoh M."/>
            <person name="Kawasawa Y."/>
            <person name="Kelso J."/>
            <person name="Kitamura H."/>
            <person name="Kitano H."/>
            <person name="Kollias G."/>
            <person name="Krishnan S.P."/>
            <person name="Kruger A."/>
            <person name="Kummerfeld S.K."/>
            <person name="Kurochkin I.V."/>
            <person name="Lareau L.F."/>
            <person name="Lazarevic D."/>
            <person name="Lipovich L."/>
            <person name="Liu J."/>
            <person name="Liuni S."/>
            <person name="McWilliam S."/>
            <person name="Madan Babu M."/>
            <person name="Madera M."/>
            <person name="Marchionni L."/>
            <person name="Matsuda H."/>
            <person name="Matsuzawa S."/>
            <person name="Miki H."/>
            <person name="Mignone F."/>
            <person name="Miyake S."/>
            <person name="Morris K."/>
            <person name="Mottagui-Tabar S."/>
            <person name="Mulder N."/>
            <person name="Nakano N."/>
            <person name="Nakauchi H."/>
            <person name="Ng P."/>
            <person name="Nilsson R."/>
            <person name="Nishiguchi S."/>
            <person name="Nishikawa S."/>
            <person name="Nori F."/>
            <person name="Ohara O."/>
            <person name="Okazaki Y."/>
            <person name="Orlando V."/>
            <person name="Pang K.C."/>
            <person name="Pavan W.J."/>
            <person name="Pavesi G."/>
            <person name="Pesole G."/>
            <person name="Petrovsky N."/>
            <person name="Piazza S."/>
            <person name="Reed J."/>
            <person name="Reid J.F."/>
            <person name="Ring B.Z."/>
            <person name="Ringwald M."/>
            <person name="Rost B."/>
            <person name="Ruan Y."/>
            <person name="Salzberg S.L."/>
            <person name="Sandelin A."/>
            <person name="Schneider C."/>
            <person name="Schoenbach C."/>
            <person name="Sekiguchi K."/>
            <person name="Semple C.A."/>
            <person name="Seno S."/>
            <person name="Sessa L."/>
            <person name="Sheng Y."/>
            <person name="Shibata Y."/>
            <person name="Shimada H."/>
            <person name="Shimada K."/>
            <person name="Silva D."/>
            <person name="Sinclair B."/>
            <person name="Sperling S."/>
            <person name="Stupka E."/>
            <person name="Sugiura K."/>
            <person name="Sultana R."/>
            <person name="Takenaka Y."/>
            <person name="Taki K."/>
            <person name="Tammoja K."/>
            <person name="Tan S.L."/>
            <person name="Tang S."/>
            <person name="Taylor M.S."/>
            <person name="Tegner J."/>
            <person name="Teichmann S.A."/>
            <person name="Ueda H.R."/>
            <person name="van Nimwegen E."/>
            <person name="Verardo R."/>
            <person name="Wei C.L."/>
            <person name="Yagi K."/>
            <person name="Yamanishi H."/>
            <person name="Zabarovsky E."/>
            <person name="Zhu S."/>
            <person name="Zimmer A."/>
            <person name="Hide W."/>
            <person name="Bult C."/>
            <person name="Grimmond S.M."/>
            <person name="Teasdale R.D."/>
            <person name="Liu E.T."/>
            <person name="Brusic V."/>
            <person name="Quackenbush J."/>
            <person name="Wahlestedt C."/>
            <person name="Mattick J.S."/>
            <person name="Hume D.A."/>
            <person name="Kai C."/>
            <person name="Sasaki D."/>
            <person name="Tomaru Y."/>
            <person name="Fukuda S."/>
            <person name="Kanamori-Katayama M."/>
            <person name="Suzuki M."/>
            <person name="Aoki J."/>
            <person name="Arakawa T."/>
            <person name="Iida J."/>
            <person name="Imamura K."/>
            <person name="Itoh M."/>
            <person name="Kato T."/>
            <person name="Kawaji H."/>
            <person name="Kawagashira N."/>
            <person name="Kawashima T."/>
            <person name="Kojima M."/>
            <person name="Kondo S."/>
            <person name="Konno H."/>
            <person name="Nakano K."/>
            <person name="Ninomiya N."/>
            <person name="Nishio T."/>
            <person name="Okada M."/>
            <person name="Plessy C."/>
            <person name="Shibata K."/>
            <person name="Shiraki T."/>
            <person name="Suzuki S."/>
            <person name="Tagami M."/>
            <person name="Waki K."/>
            <person name="Watahiki A."/>
            <person name="Okamura-Oho Y."/>
            <person name="Suzuki H."/>
            <person name="Kawai J."/>
            <person name="Hayashizaki Y."/>
        </authorList>
    </citation>
    <scope>NUCLEOTIDE SEQUENCE [LARGE SCALE MRNA]</scope>
    <source>
        <strain>C57BL/6J</strain>
        <tissue>Kidney</tissue>
        <tissue>Lung</tissue>
        <tissue>Urinary bladder</tissue>
    </source>
</reference>
<reference key="6">
    <citation type="journal article" date="2004" name="Genome Res.">
        <title>The status, quality, and expansion of the NIH full-length cDNA project: the Mammalian Gene Collection (MGC).</title>
        <authorList>
            <consortium name="The MGC Project Team"/>
        </authorList>
    </citation>
    <scope>NUCLEOTIDE SEQUENCE [LARGE SCALE MRNA]</scope>
    <source>
        <strain>FVB/N</strain>
        <tissue>Liver</tissue>
    </source>
</reference>
<reference key="7">
    <citation type="submission" date="2007-04" db="UniProtKB">
        <authorList>
            <person name="Lubec G."/>
            <person name="Klug S."/>
            <person name="Kang S.U."/>
        </authorList>
    </citation>
    <scope>PROTEIN SEQUENCE OF 50-62; 111-130; 205-218; 230-240; 297-304 AND 319-340</scope>
    <scope>IDENTIFICATION BY MASS SPECTROMETRY</scope>
    <source>
        <strain>C57BL/6J</strain>
        <tissue>Brain</tissue>
        <tissue>Hippocampus</tissue>
    </source>
</reference>
<reference key="8">
    <citation type="journal article" date="2010" name="Cell">
        <title>A tissue-specific atlas of mouse protein phosphorylation and expression.</title>
        <authorList>
            <person name="Huttlin E.L."/>
            <person name="Jedrychowski M.P."/>
            <person name="Elias J.E."/>
            <person name="Goswami T."/>
            <person name="Rad R."/>
            <person name="Beausoleil S.A."/>
            <person name="Villen J."/>
            <person name="Haas W."/>
            <person name="Sowa M.E."/>
            <person name="Gygi S.P."/>
        </authorList>
    </citation>
    <scope>IDENTIFICATION BY MASS SPECTROMETRY [LARGE SCALE ANALYSIS]</scope>
    <source>
        <tissue>Brain</tissue>
        <tissue>Brown adipose tissue</tissue>
        <tissue>Heart</tissue>
        <tissue>Kidney</tissue>
        <tissue>Liver</tissue>
        <tissue>Lung</tissue>
        <tissue>Pancreas</tissue>
        <tissue>Spleen</tissue>
        <tissue>Testis</tissue>
    </source>
</reference>
<reference key="9">
    <citation type="journal article" date="2013" name="Mol. Cell">
        <title>SIRT5-mediated lysine desuccinylation impacts diverse metabolic pathways.</title>
        <authorList>
            <person name="Park J."/>
            <person name="Chen Y."/>
            <person name="Tishkoff D.X."/>
            <person name="Peng C."/>
            <person name="Tan M."/>
            <person name="Dai L."/>
            <person name="Xie Z."/>
            <person name="Zhang Y."/>
            <person name="Zwaans B.M."/>
            <person name="Skinner M.E."/>
            <person name="Lombard D.B."/>
            <person name="Zhao Y."/>
        </authorList>
    </citation>
    <scope>SUCCINYLATION [LARGE SCALE ANALYSIS] AT LYS-289</scope>
    <scope>IDENTIFICATION BY MASS SPECTROMETRY [LARGE SCALE ANALYSIS]</scope>
    <source>
        <tissue>Liver</tissue>
    </source>
</reference>
<feature type="chain" id="PRO_0000138080" description="Glycerol-3-phosphate dehydrogenase [NAD(+)], cytoplasmic">
    <location>
        <begin position="1"/>
        <end position="349"/>
    </location>
</feature>
<feature type="active site" description="Proton acceptor" evidence="4">
    <location>
        <position position="204"/>
    </location>
</feature>
<feature type="binding site" evidence="3">
    <location>
        <begin position="10"/>
        <end position="15"/>
    </location>
    <ligand>
        <name>NAD(+)</name>
        <dbReference type="ChEBI" id="CHEBI:57540"/>
    </ligand>
</feature>
<feature type="binding site" evidence="1">
    <location>
        <position position="120"/>
    </location>
    <ligand>
        <name>substrate</name>
    </ligand>
</feature>
<feature type="binding site" evidence="3">
    <location>
        <position position="153"/>
    </location>
    <ligand>
        <name>NAD(+)</name>
        <dbReference type="ChEBI" id="CHEBI:57540"/>
    </ligand>
</feature>
<feature type="binding site" evidence="1">
    <location>
        <begin position="269"/>
        <end position="270"/>
    </location>
    <ligand>
        <name>substrate</name>
    </ligand>
</feature>
<feature type="binding site" evidence="3">
    <location>
        <position position="269"/>
    </location>
    <ligand>
        <name>NAD(+)</name>
        <dbReference type="ChEBI" id="CHEBI:57540"/>
    </ligand>
</feature>
<feature type="binding site" evidence="3">
    <location>
        <position position="296"/>
    </location>
    <ligand>
        <name>NAD(+)</name>
        <dbReference type="ChEBI" id="CHEBI:57540"/>
    </ligand>
</feature>
<feature type="binding site" evidence="3">
    <location>
        <position position="298"/>
    </location>
    <ligand>
        <name>NAD(+)</name>
        <dbReference type="ChEBI" id="CHEBI:57540"/>
    </ligand>
</feature>
<feature type="modified residue" description="Phosphoserine" evidence="3">
    <location>
        <position position="154"/>
    </location>
</feature>
<feature type="modified residue" description="N6-succinyllysine" evidence="7">
    <location>
        <position position="289"/>
    </location>
</feature>
<feature type="modified residue" description="Phosphotyrosine" evidence="2">
    <location>
        <position position="326"/>
    </location>
</feature>
<feature type="sequence conflict" description="In Ref. 7; AA sequence." evidence="5" ref="7">
    <original>G</original>
    <variation>R</variation>
    <location>
        <position position="218"/>
    </location>
</feature>
<feature type="sequence conflict" description="In Ref. 2; AAA37726/AAA37727 and 4; BAD90479." evidence="5" ref="2 4">
    <original>T</original>
    <variation>I</variation>
    <location>
        <position position="246"/>
    </location>
</feature>
<feature type="sequence conflict" description="In Ref. 5; BAE23246." evidence="5" ref="5">
    <original>K</original>
    <variation>R</variation>
    <location>
        <position position="318"/>
    </location>
</feature>
<gene>
    <name evidence="6" type="primary">Gpd1</name>
    <name type="synonym">Gdc-1</name>
    <name type="synonym">Gdc1</name>
    <name type="synonym">Kiaa4010</name>
</gene>
<name>GPDA_MOUSE</name>
<sequence>MAGKKVCIVGSGNWGSAIAKIVGSNAGRLAHFDPRVTMWVFEEDIGGRKLTEIINTQHENVKYLPGHKLPPNVVAIPDVVQAATGADILVFVVPHQFIGKICDQLKGHLKANTIGISLIKGVDEGPNGLKLISEVIGERLGIPMSVLMGANIASEVAEEKFCETTIGCKDPAQGQLLKDLMQTPNFRITVVQEVDTVEICGALKNIVAVGAGFCDGLGFGDNTKAAVIRLGLMEMIAFAKLFCSGTVSSATFLESCGVADLITTCYGGRNRKVAEAFARTGKSIEQLEKEMLNGQKLQGPQTARELHSILQHKGLVDKFPLFTAVYKVCYEGQPVGEFIRCLQNHPEHM</sequence>
<comment type="function">
    <text evidence="3">Has glycerol-3-phosphate dehydrogenase activity.</text>
</comment>
<comment type="catalytic activity">
    <reaction evidence="3">
        <text>sn-glycerol 3-phosphate + NAD(+) = dihydroxyacetone phosphate + NADH + H(+)</text>
        <dbReference type="Rhea" id="RHEA:11092"/>
        <dbReference type="ChEBI" id="CHEBI:15378"/>
        <dbReference type="ChEBI" id="CHEBI:57540"/>
        <dbReference type="ChEBI" id="CHEBI:57597"/>
        <dbReference type="ChEBI" id="CHEBI:57642"/>
        <dbReference type="ChEBI" id="CHEBI:57945"/>
        <dbReference type="EC" id="1.1.1.8"/>
    </reaction>
    <physiologicalReaction direction="left-to-right" evidence="3">
        <dbReference type="Rhea" id="RHEA:11093"/>
    </physiologicalReaction>
</comment>
<comment type="subunit">
    <text>Homodimer.</text>
</comment>
<comment type="subcellular location">
    <subcellularLocation>
        <location evidence="3">Cytoplasm</location>
    </subcellularLocation>
</comment>
<comment type="similarity">
    <text evidence="5">Belongs to the NAD-dependent glycerol-3-phosphate dehydrogenase family.</text>
</comment>
<comment type="sequence caution" evidence="5">
    <conflict type="erroneous initiation">
        <sequence resource="EMBL-CDS" id="BAD90479"/>
    </conflict>
    <text>Extended N-terminus.</text>
</comment>
<keyword id="KW-0963">Cytoplasm</keyword>
<keyword id="KW-0903">Direct protein sequencing</keyword>
<keyword id="KW-0520">NAD</keyword>
<keyword id="KW-0560">Oxidoreductase</keyword>
<keyword id="KW-0597">Phosphoprotein</keyword>
<keyword id="KW-1185">Reference proteome</keyword>
<proteinExistence type="evidence at protein level"/>
<organism>
    <name type="scientific">Mus musculus</name>
    <name type="common">Mouse</name>
    <dbReference type="NCBI Taxonomy" id="10090"/>
    <lineage>
        <taxon>Eukaryota</taxon>
        <taxon>Metazoa</taxon>
        <taxon>Chordata</taxon>
        <taxon>Craniata</taxon>
        <taxon>Vertebrata</taxon>
        <taxon>Euteleostomi</taxon>
        <taxon>Mammalia</taxon>
        <taxon>Eutheria</taxon>
        <taxon>Euarchontoglires</taxon>
        <taxon>Glires</taxon>
        <taxon>Rodentia</taxon>
        <taxon>Myomorpha</taxon>
        <taxon>Muroidea</taxon>
        <taxon>Muridae</taxon>
        <taxon>Murinae</taxon>
        <taxon>Mus</taxon>
        <taxon>Mus</taxon>
    </lineage>
</organism>
<protein>
    <recommendedName>
        <fullName>Glycerol-3-phosphate dehydrogenase [NAD(+)], cytoplasmic</fullName>
        <shortName>GPD-C</shortName>
        <shortName>GPDH-C</shortName>
        <ecNumber evidence="3">1.1.1.8</ecNumber>
    </recommendedName>
</protein>
<accession>P13707</accession>
<accession>Q3UVM3</accession>
<accession>Q5DTS5</accession>
<evidence type="ECO:0000250" key="1"/>
<evidence type="ECO:0000250" key="2">
    <source>
        <dbReference type="UniProtKB" id="O35077"/>
    </source>
</evidence>
<evidence type="ECO:0000250" key="3">
    <source>
        <dbReference type="UniProtKB" id="P21695"/>
    </source>
</evidence>
<evidence type="ECO:0000255" key="4"/>
<evidence type="ECO:0000305" key="5"/>
<evidence type="ECO:0000312" key="6">
    <source>
        <dbReference type="MGI" id="MGI:95679"/>
    </source>
</evidence>
<evidence type="ECO:0007744" key="7">
    <source>
    </source>
</evidence>
<dbReference type="EC" id="1.1.1.8" evidence="3"/>
<dbReference type="EMBL" id="J02655">
    <property type="protein sequence ID" value="AAA37728.1"/>
    <property type="molecule type" value="mRNA"/>
</dbReference>
<dbReference type="EMBL" id="M25558">
    <property type="protein sequence ID" value="AAA37726.1"/>
    <property type="molecule type" value="Genomic_DNA"/>
</dbReference>
<dbReference type="EMBL" id="M13366">
    <property type="protein sequence ID" value="AAA37727.1"/>
    <property type="molecule type" value="Genomic_DNA"/>
</dbReference>
<dbReference type="EMBL" id="AK220445">
    <property type="protein sequence ID" value="BAD90479.1"/>
    <property type="status" value="ALT_INIT"/>
    <property type="molecule type" value="mRNA"/>
</dbReference>
<dbReference type="EMBL" id="AK137134">
    <property type="protein sequence ID" value="BAE23246.1"/>
    <property type="molecule type" value="mRNA"/>
</dbReference>
<dbReference type="EMBL" id="AK004565">
    <property type="protein sequence ID" value="BAB23376.1"/>
    <property type="molecule type" value="mRNA"/>
</dbReference>
<dbReference type="EMBL" id="AK018733">
    <property type="protein sequence ID" value="BAB31376.1"/>
    <property type="molecule type" value="mRNA"/>
</dbReference>
<dbReference type="EMBL" id="BC005756">
    <property type="protein sequence ID" value="AAH05756.1"/>
    <property type="molecule type" value="mRNA"/>
</dbReference>
<dbReference type="EMBL" id="BC019391">
    <property type="protein sequence ID" value="AAH19391.1"/>
    <property type="molecule type" value="mRNA"/>
</dbReference>
<dbReference type="CCDS" id="CCDS27828.1"/>
<dbReference type="PIR" id="A25952">
    <property type="entry name" value="A25952"/>
</dbReference>
<dbReference type="RefSeq" id="NP_034401.1">
    <property type="nucleotide sequence ID" value="NM_010271.3"/>
</dbReference>
<dbReference type="SMR" id="P13707"/>
<dbReference type="BioGRID" id="199883">
    <property type="interactions" value="2"/>
</dbReference>
<dbReference type="FunCoup" id="P13707">
    <property type="interactions" value="1196"/>
</dbReference>
<dbReference type="IntAct" id="P13707">
    <property type="interactions" value="3"/>
</dbReference>
<dbReference type="MINT" id="P13707"/>
<dbReference type="STRING" id="10090.ENSMUSP00000023760"/>
<dbReference type="ChEMBL" id="CHEMBL1075171"/>
<dbReference type="GlyGen" id="P13707">
    <property type="glycosylation" value="1 site, 1 O-linked glycan (1 site)"/>
</dbReference>
<dbReference type="iPTMnet" id="P13707"/>
<dbReference type="PhosphoSitePlus" id="P13707"/>
<dbReference type="SwissPalm" id="P13707"/>
<dbReference type="REPRODUCTION-2DPAGE" id="IPI00230185"/>
<dbReference type="REPRODUCTION-2DPAGE" id="P13707"/>
<dbReference type="CPTAC" id="non-CPTAC-3813"/>
<dbReference type="jPOST" id="P13707"/>
<dbReference type="PaxDb" id="10090-ENSMUSP00000023760"/>
<dbReference type="PeptideAtlas" id="P13707"/>
<dbReference type="ProteomicsDB" id="271037"/>
<dbReference type="Antibodypedia" id="26155">
    <property type="antibodies" value="339 antibodies from 33 providers"/>
</dbReference>
<dbReference type="DNASU" id="14555"/>
<dbReference type="Ensembl" id="ENSMUST00000023760.13">
    <property type="protein sequence ID" value="ENSMUSP00000023760.7"/>
    <property type="gene ID" value="ENSMUSG00000023019.13"/>
</dbReference>
<dbReference type="GeneID" id="14555"/>
<dbReference type="KEGG" id="mmu:14555"/>
<dbReference type="UCSC" id="uc007xqd.1">
    <property type="organism name" value="mouse"/>
</dbReference>
<dbReference type="AGR" id="MGI:95679"/>
<dbReference type="CTD" id="2819"/>
<dbReference type="MGI" id="MGI:95679">
    <property type="gene designation" value="Gpd1"/>
</dbReference>
<dbReference type="VEuPathDB" id="HostDB:ENSMUSG00000023019"/>
<dbReference type="eggNOG" id="KOG2711">
    <property type="taxonomic scope" value="Eukaryota"/>
</dbReference>
<dbReference type="GeneTree" id="ENSGT00390000003114"/>
<dbReference type="InParanoid" id="P13707"/>
<dbReference type="OMA" id="NRMFGNM"/>
<dbReference type="OrthoDB" id="10263760at2759"/>
<dbReference type="PhylomeDB" id="P13707"/>
<dbReference type="TreeFam" id="TF300836"/>
<dbReference type="BRENDA" id="1.1.1.8">
    <property type="organism ID" value="3474"/>
</dbReference>
<dbReference type="Reactome" id="R-MMU-1483166">
    <property type="pathway name" value="Synthesis of PA"/>
</dbReference>
<dbReference type="SABIO-RK" id="P13707"/>
<dbReference type="BioGRID-ORCS" id="14555">
    <property type="hits" value="3 hits in 79 CRISPR screens"/>
</dbReference>
<dbReference type="ChiTaRS" id="Gpd1">
    <property type="organism name" value="mouse"/>
</dbReference>
<dbReference type="PRO" id="PR:P13707"/>
<dbReference type="Proteomes" id="UP000000589">
    <property type="component" value="Chromosome 15"/>
</dbReference>
<dbReference type="RNAct" id="P13707">
    <property type="molecule type" value="protein"/>
</dbReference>
<dbReference type="Bgee" id="ENSMUSG00000023019">
    <property type="expression patterns" value="Expressed in brown adipose tissue and 213 other cell types or tissues"/>
</dbReference>
<dbReference type="ExpressionAtlas" id="P13707">
    <property type="expression patterns" value="baseline and differential"/>
</dbReference>
<dbReference type="GO" id="GO:0005829">
    <property type="term" value="C:cytosol"/>
    <property type="evidence" value="ECO:0000314"/>
    <property type="project" value="MGI"/>
</dbReference>
<dbReference type="GO" id="GO:0005739">
    <property type="term" value="C:mitochondrion"/>
    <property type="evidence" value="ECO:0007005"/>
    <property type="project" value="MGI"/>
</dbReference>
<dbReference type="GO" id="GO:0141152">
    <property type="term" value="F:glycerol-3-phosphate dehydrogenase (NAD+) activity"/>
    <property type="evidence" value="ECO:0007669"/>
    <property type="project" value="UniProtKB-EC"/>
</dbReference>
<dbReference type="GO" id="GO:0047952">
    <property type="term" value="F:glycerol-3-phosphate dehydrogenase [NAD(P)+] activity"/>
    <property type="evidence" value="ECO:0000314"/>
    <property type="project" value="MGI"/>
</dbReference>
<dbReference type="GO" id="GO:0051287">
    <property type="term" value="F:NAD binding"/>
    <property type="evidence" value="ECO:0007669"/>
    <property type="project" value="InterPro"/>
</dbReference>
<dbReference type="GO" id="GO:0042803">
    <property type="term" value="F:protein homodimerization activity"/>
    <property type="evidence" value="ECO:0007669"/>
    <property type="project" value="InterPro"/>
</dbReference>
<dbReference type="GO" id="GO:0071320">
    <property type="term" value="P:cellular response to cAMP"/>
    <property type="evidence" value="ECO:0000314"/>
    <property type="project" value="MGI"/>
</dbReference>
<dbReference type="GO" id="GO:0071356">
    <property type="term" value="P:cellular response to tumor necrosis factor"/>
    <property type="evidence" value="ECO:0000314"/>
    <property type="project" value="MGI"/>
</dbReference>
<dbReference type="GO" id="GO:0006094">
    <property type="term" value="P:gluconeogenesis"/>
    <property type="evidence" value="ECO:0000315"/>
    <property type="project" value="MGI"/>
</dbReference>
<dbReference type="GO" id="GO:0046166">
    <property type="term" value="P:glyceraldehyde-3-phosphate biosynthetic process"/>
    <property type="evidence" value="ECO:0000266"/>
    <property type="project" value="MGI"/>
</dbReference>
<dbReference type="GO" id="GO:0046168">
    <property type="term" value="P:glycerol-3-phosphate catabolic process"/>
    <property type="evidence" value="ECO:0007669"/>
    <property type="project" value="InterPro"/>
</dbReference>
<dbReference type="GO" id="GO:0006072">
    <property type="term" value="P:glycerol-3-phosphate metabolic process"/>
    <property type="evidence" value="ECO:0000315"/>
    <property type="project" value="MGI"/>
</dbReference>
<dbReference type="GO" id="GO:0006127">
    <property type="term" value="P:glycerol-3-phosphate shuttle"/>
    <property type="evidence" value="ECO:0000315"/>
    <property type="project" value="MGI"/>
</dbReference>
<dbReference type="GO" id="GO:0045821">
    <property type="term" value="P:positive regulation of glycolytic process"/>
    <property type="evidence" value="ECO:0000315"/>
    <property type="project" value="MGI"/>
</dbReference>
<dbReference type="FunFam" id="3.40.50.720:FF:000088">
    <property type="entry name" value="Glycerol-3-phosphate dehydrogenase [NAD(+)]"/>
    <property type="match status" value="1"/>
</dbReference>
<dbReference type="FunFam" id="1.10.1040.10:FF:000084">
    <property type="entry name" value="Glycerol-3-phosphate dehydrogenase [NAD(+)], cytoplasmic"/>
    <property type="match status" value="1"/>
</dbReference>
<dbReference type="Gene3D" id="1.10.1040.10">
    <property type="entry name" value="N-(1-d-carboxylethyl)-l-norvaline Dehydrogenase, domain 2"/>
    <property type="match status" value="1"/>
</dbReference>
<dbReference type="Gene3D" id="3.40.50.720">
    <property type="entry name" value="NAD(P)-binding Rossmann-like Domain"/>
    <property type="match status" value="1"/>
</dbReference>
<dbReference type="InterPro" id="IPR008927">
    <property type="entry name" value="6-PGluconate_DH-like_C_sf"/>
</dbReference>
<dbReference type="InterPro" id="IPR013328">
    <property type="entry name" value="6PGD_dom2"/>
</dbReference>
<dbReference type="InterPro" id="IPR006168">
    <property type="entry name" value="G3P_DH_NAD-dep"/>
</dbReference>
<dbReference type="InterPro" id="IPR006109">
    <property type="entry name" value="G3P_DH_NAD-dep_C"/>
</dbReference>
<dbReference type="InterPro" id="IPR017751">
    <property type="entry name" value="G3P_DH_NAD-dep_euk"/>
</dbReference>
<dbReference type="InterPro" id="IPR011128">
    <property type="entry name" value="G3P_DH_NAD-dep_N"/>
</dbReference>
<dbReference type="InterPro" id="IPR036291">
    <property type="entry name" value="NAD(P)-bd_dom_sf"/>
</dbReference>
<dbReference type="NCBIfam" id="TIGR03376">
    <property type="entry name" value="glycerol3P_DH"/>
    <property type="match status" value="1"/>
</dbReference>
<dbReference type="PANTHER" id="PTHR11728">
    <property type="entry name" value="GLYCEROL-3-PHOSPHATE DEHYDROGENASE"/>
    <property type="match status" value="1"/>
</dbReference>
<dbReference type="PANTHER" id="PTHR11728:SF32">
    <property type="entry name" value="GLYCEROL-3-PHOSPHATE DEHYDROGENASE [NAD(+)], CYTOPLASMIC"/>
    <property type="match status" value="1"/>
</dbReference>
<dbReference type="Pfam" id="PF07479">
    <property type="entry name" value="NAD_Gly3P_dh_C"/>
    <property type="match status" value="1"/>
</dbReference>
<dbReference type="Pfam" id="PF01210">
    <property type="entry name" value="NAD_Gly3P_dh_N"/>
    <property type="match status" value="1"/>
</dbReference>
<dbReference type="PIRSF" id="PIRSF000114">
    <property type="entry name" value="Glycerol-3-P_dh"/>
    <property type="match status" value="1"/>
</dbReference>
<dbReference type="PRINTS" id="PR00077">
    <property type="entry name" value="GPDHDRGNASE"/>
</dbReference>
<dbReference type="SUPFAM" id="SSF48179">
    <property type="entry name" value="6-phosphogluconate dehydrogenase C-terminal domain-like"/>
    <property type="match status" value="1"/>
</dbReference>
<dbReference type="SUPFAM" id="SSF51735">
    <property type="entry name" value="NAD(P)-binding Rossmann-fold domains"/>
    <property type="match status" value="1"/>
</dbReference>
<dbReference type="PROSITE" id="PS00957">
    <property type="entry name" value="NAD_G3PDH"/>
    <property type="match status" value="1"/>
</dbReference>